<evidence type="ECO:0000255" key="1">
    <source>
        <dbReference type="HAMAP-Rule" id="MF_01661"/>
    </source>
</evidence>
<name>RBSD_PARC0</name>
<reference key="1">
    <citation type="submission" date="2006-12" db="EMBL/GenBank/DDBJ databases">
        <title>Complete sequence of Acidovorax avenae subsp. citrulli AAC00-1.</title>
        <authorList>
            <person name="Copeland A."/>
            <person name="Lucas S."/>
            <person name="Lapidus A."/>
            <person name="Barry K."/>
            <person name="Detter J.C."/>
            <person name="Glavina del Rio T."/>
            <person name="Dalin E."/>
            <person name="Tice H."/>
            <person name="Pitluck S."/>
            <person name="Kiss H."/>
            <person name="Brettin T."/>
            <person name="Bruce D."/>
            <person name="Han C."/>
            <person name="Tapia R."/>
            <person name="Gilna P."/>
            <person name="Schmutz J."/>
            <person name="Larimer F."/>
            <person name="Land M."/>
            <person name="Hauser L."/>
            <person name="Kyrpides N."/>
            <person name="Kim E."/>
            <person name="Stahl D."/>
            <person name="Richardson P."/>
        </authorList>
    </citation>
    <scope>NUCLEOTIDE SEQUENCE [LARGE SCALE GENOMIC DNA]</scope>
    <source>
        <strain>AAC00-1</strain>
    </source>
</reference>
<organism>
    <name type="scientific">Paracidovorax citrulli (strain AAC00-1)</name>
    <name type="common">Acidovorax citrulli</name>
    <dbReference type="NCBI Taxonomy" id="397945"/>
    <lineage>
        <taxon>Bacteria</taxon>
        <taxon>Pseudomonadati</taxon>
        <taxon>Pseudomonadota</taxon>
        <taxon>Betaproteobacteria</taxon>
        <taxon>Burkholderiales</taxon>
        <taxon>Comamonadaceae</taxon>
        <taxon>Paracidovorax</taxon>
    </lineage>
</organism>
<proteinExistence type="inferred from homology"/>
<sequence>MKRTALLHADLSRAIAALGHGDMIVIGDAGLPIPPGPLRIDLAVTPGLPAVADVLAAVLSEMQVERALVATEAVERAGGALPGWAGALPVAPQTLSHEEFKRLTRDARAVVRTGECTPYANVILCAGVTF</sequence>
<feature type="chain" id="PRO_0000346163" description="D-ribose pyranase">
    <location>
        <begin position="1"/>
        <end position="130"/>
    </location>
</feature>
<feature type="active site" description="Proton donor" evidence="1">
    <location>
        <position position="20"/>
    </location>
</feature>
<feature type="binding site" evidence="1">
    <location>
        <position position="28"/>
    </location>
    <ligand>
        <name>substrate</name>
    </ligand>
</feature>
<feature type="binding site" evidence="1">
    <location>
        <position position="97"/>
    </location>
    <ligand>
        <name>substrate</name>
    </ligand>
</feature>
<feature type="binding site" evidence="1">
    <location>
        <begin position="119"/>
        <end position="121"/>
    </location>
    <ligand>
        <name>substrate</name>
    </ligand>
</feature>
<comment type="function">
    <text evidence="1">Catalyzes the interconversion of beta-pyran and beta-furan forms of D-ribose.</text>
</comment>
<comment type="catalytic activity">
    <reaction evidence="1">
        <text>beta-D-ribopyranose = beta-D-ribofuranose</text>
        <dbReference type="Rhea" id="RHEA:25432"/>
        <dbReference type="ChEBI" id="CHEBI:27476"/>
        <dbReference type="ChEBI" id="CHEBI:47002"/>
        <dbReference type="EC" id="5.4.99.62"/>
    </reaction>
</comment>
<comment type="pathway">
    <text evidence="1">Carbohydrate metabolism; D-ribose degradation; D-ribose 5-phosphate from beta-D-ribopyranose: step 1/2.</text>
</comment>
<comment type="subunit">
    <text evidence="1">Homodecamer.</text>
</comment>
<comment type="subcellular location">
    <subcellularLocation>
        <location evidence="1">Cytoplasm</location>
    </subcellularLocation>
</comment>
<comment type="similarity">
    <text evidence="1">Belongs to the RbsD / FucU family. RbsD subfamily.</text>
</comment>
<gene>
    <name evidence="1" type="primary">rbsD</name>
    <name type="ordered locus">Aave_4201</name>
</gene>
<accession>A1TUV3</accession>
<protein>
    <recommendedName>
        <fullName evidence="1">D-ribose pyranase</fullName>
        <ecNumber evidence="1">5.4.99.62</ecNumber>
    </recommendedName>
</protein>
<dbReference type="EC" id="5.4.99.62" evidence="1"/>
<dbReference type="EMBL" id="CP000512">
    <property type="protein sequence ID" value="ABM34741.1"/>
    <property type="molecule type" value="Genomic_DNA"/>
</dbReference>
<dbReference type="RefSeq" id="WP_011797215.1">
    <property type="nucleotide sequence ID" value="NC_008752.1"/>
</dbReference>
<dbReference type="SMR" id="A1TUV3"/>
<dbReference type="STRING" id="397945.Aave_4201"/>
<dbReference type="GeneID" id="79789173"/>
<dbReference type="KEGG" id="aav:Aave_4201"/>
<dbReference type="eggNOG" id="COG1869">
    <property type="taxonomic scope" value="Bacteria"/>
</dbReference>
<dbReference type="HOGENOM" id="CLU_135498_0_0_4"/>
<dbReference type="OrthoDB" id="9805009at2"/>
<dbReference type="UniPathway" id="UPA00916">
    <property type="reaction ID" value="UER00888"/>
</dbReference>
<dbReference type="Proteomes" id="UP000002596">
    <property type="component" value="Chromosome"/>
</dbReference>
<dbReference type="GO" id="GO:0005829">
    <property type="term" value="C:cytosol"/>
    <property type="evidence" value="ECO:0007669"/>
    <property type="project" value="TreeGrafter"/>
</dbReference>
<dbReference type="GO" id="GO:0062193">
    <property type="term" value="F:D-ribose pyranase activity"/>
    <property type="evidence" value="ECO:0007669"/>
    <property type="project" value="UniProtKB-EC"/>
</dbReference>
<dbReference type="GO" id="GO:0016872">
    <property type="term" value="F:intramolecular lyase activity"/>
    <property type="evidence" value="ECO:0007669"/>
    <property type="project" value="UniProtKB-UniRule"/>
</dbReference>
<dbReference type="GO" id="GO:0048029">
    <property type="term" value="F:monosaccharide binding"/>
    <property type="evidence" value="ECO:0007669"/>
    <property type="project" value="InterPro"/>
</dbReference>
<dbReference type="GO" id="GO:0019303">
    <property type="term" value="P:D-ribose catabolic process"/>
    <property type="evidence" value="ECO:0007669"/>
    <property type="project" value="UniProtKB-UniRule"/>
</dbReference>
<dbReference type="Gene3D" id="3.40.1650.10">
    <property type="entry name" value="RbsD-like domain"/>
    <property type="match status" value="1"/>
</dbReference>
<dbReference type="HAMAP" id="MF_01661">
    <property type="entry name" value="D_rib_pyranase"/>
    <property type="match status" value="1"/>
</dbReference>
<dbReference type="InterPro" id="IPR023064">
    <property type="entry name" value="D-ribose_pyranase"/>
</dbReference>
<dbReference type="InterPro" id="IPR023750">
    <property type="entry name" value="RbsD-like_sf"/>
</dbReference>
<dbReference type="InterPro" id="IPR007721">
    <property type="entry name" value="RbsD_FucU"/>
</dbReference>
<dbReference type="NCBIfam" id="NF008761">
    <property type="entry name" value="PRK11797.1"/>
    <property type="match status" value="1"/>
</dbReference>
<dbReference type="PANTHER" id="PTHR37831">
    <property type="entry name" value="D-RIBOSE PYRANASE"/>
    <property type="match status" value="1"/>
</dbReference>
<dbReference type="PANTHER" id="PTHR37831:SF1">
    <property type="entry name" value="D-RIBOSE PYRANASE"/>
    <property type="match status" value="1"/>
</dbReference>
<dbReference type="Pfam" id="PF05025">
    <property type="entry name" value="RbsD_FucU"/>
    <property type="match status" value="1"/>
</dbReference>
<dbReference type="SUPFAM" id="SSF102546">
    <property type="entry name" value="RbsD-like"/>
    <property type="match status" value="1"/>
</dbReference>
<keyword id="KW-0119">Carbohydrate metabolism</keyword>
<keyword id="KW-0963">Cytoplasm</keyword>
<keyword id="KW-0413">Isomerase</keyword>